<proteinExistence type="inferred from homology"/>
<evidence type="ECO:0000255" key="1">
    <source>
        <dbReference type="HAMAP-Rule" id="MF_00412"/>
    </source>
</evidence>
<reference key="1">
    <citation type="journal article" date="2008" name="PLoS Genet.">
        <title>Complete genome sequence of the N2-fixing broad host range endophyte Klebsiella pneumoniae 342 and virulence predictions verified in mice.</title>
        <authorList>
            <person name="Fouts D.E."/>
            <person name="Tyler H.L."/>
            <person name="DeBoy R.T."/>
            <person name="Daugherty S."/>
            <person name="Ren Q."/>
            <person name="Badger J.H."/>
            <person name="Durkin A.S."/>
            <person name="Huot H."/>
            <person name="Shrivastava S."/>
            <person name="Kothari S."/>
            <person name="Dodson R.J."/>
            <person name="Mohamoud Y."/>
            <person name="Khouri H."/>
            <person name="Roesch L.F.W."/>
            <person name="Krogfelt K.A."/>
            <person name="Struve C."/>
            <person name="Triplett E.W."/>
            <person name="Methe B.A."/>
        </authorList>
    </citation>
    <scope>NUCLEOTIDE SEQUENCE [LARGE SCALE GENOMIC DNA]</scope>
    <source>
        <strain>342</strain>
    </source>
</reference>
<keyword id="KW-0028">Amino-acid biosynthesis</keyword>
<keyword id="KW-0963">Cytoplasm</keyword>
<keyword id="KW-0521">NADP</keyword>
<keyword id="KW-0560">Oxidoreductase</keyword>
<keyword id="KW-0641">Proline biosynthesis</keyword>
<dbReference type="EC" id="1.2.1.41" evidence="1"/>
<dbReference type="EMBL" id="CP000964">
    <property type="protein sequence ID" value="ACI08686.1"/>
    <property type="molecule type" value="Genomic_DNA"/>
</dbReference>
<dbReference type="SMR" id="B5Y169"/>
<dbReference type="KEGG" id="kpe:KPK_4410"/>
<dbReference type="HOGENOM" id="CLU_030231_0_0_6"/>
<dbReference type="UniPathway" id="UPA00098">
    <property type="reaction ID" value="UER00360"/>
</dbReference>
<dbReference type="Proteomes" id="UP000001734">
    <property type="component" value="Chromosome"/>
</dbReference>
<dbReference type="GO" id="GO:0005737">
    <property type="term" value="C:cytoplasm"/>
    <property type="evidence" value="ECO:0007669"/>
    <property type="project" value="UniProtKB-SubCell"/>
</dbReference>
<dbReference type="GO" id="GO:0004350">
    <property type="term" value="F:glutamate-5-semialdehyde dehydrogenase activity"/>
    <property type="evidence" value="ECO:0007669"/>
    <property type="project" value="UniProtKB-UniRule"/>
</dbReference>
<dbReference type="GO" id="GO:0050661">
    <property type="term" value="F:NADP binding"/>
    <property type="evidence" value="ECO:0007669"/>
    <property type="project" value="InterPro"/>
</dbReference>
<dbReference type="GO" id="GO:0055129">
    <property type="term" value="P:L-proline biosynthetic process"/>
    <property type="evidence" value="ECO:0007669"/>
    <property type="project" value="UniProtKB-UniRule"/>
</dbReference>
<dbReference type="CDD" id="cd07079">
    <property type="entry name" value="ALDH_F18-19_ProA-GPR"/>
    <property type="match status" value="1"/>
</dbReference>
<dbReference type="FunFam" id="3.40.309.10:FF:000006">
    <property type="entry name" value="Gamma-glutamyl phosphate reductase"/>
    <property type="match status" value="1"/>
</dbReference>
<dbReference type="Gene3D" id="3.40.605.10">
    <property type="entry name" value="Aldehyde Dehydrogenase, Chain A, domain 1"/>
    <property type="match status" value="1"/>
</dbReference>
<dbReference type="Gene3D" id="3.40.309.10">
    <property type="entry name" value="Aldehyde Dehydrogenase, Chain A, domain 2"/>
    <property type="match status" value="1"/>
</dbReference>
<dbReference type="HAMAP" id="MF_00412">
    <property type="entry name" value="ProA"/>
    <property type="match status" value="1"/>
</dbReference>
<dbReference type="InterPro" id="IPR016161">
    <property type="entry name" value="Ald_DH/histidinol_DH"/>
</dbReference>
<dbReference type="InterPro" id="IPR016163">
    <property type="entry name" value="Ald_DH_C"/>
</dbReference>
<dbReference type="InterPro" id="IPR016162">
    <property type="entry name" value="Ald_DH_N"/>
</dbReference>
<dbReference type="InterPro" id="IPR015590">
    <property type="entry name" value="Aldehyde_DH_dom"/>
</dbReference>
<dbReference type="InterPro" id="IPR020593">
    <property type="entry name" value="G-glutamylP_reductase_CS"/>
</dbReference>
<dbReference type="InterPro" id="IPR012134">
    <property type="entry name" value="Glu-5-SA_DH"/>
</dbReference>
<dbReference type="InterPro" id="IPR000965">
    <property type="entry name" value="GPR_dom"/>
</dbReference>
<dbReference type="NCBIfam" id="NF001221">
    <property type="entry name" value="PRK00197.1"/>
    <property type="match status" value="1"/>
</dbReference>
<dbReference type="NCBIfam" id="TIGR00407">
    <property type="entry name" value="proA"/>
    <property type="match status" value="1"/>
</dbReference>
<dbReference type="PANTHER" id="PTHR11063:SF8">
    <property type="entry name" value="DELTA-1-PYRROLINE-5-CARBOXYLATE SYNTHASE"/>
    <property type="match status" value="1"/>
</dbReference>
<dbReference type="PANTHER" id="PTHR11063">
    <property type="entry name" value="GLUTAMATE SEMIALDEHYDE DEHYDROGENASE"/>
    <property type="match status" value="1"/>
</dbReference>
<dbReference type="Pfam" id="PF00171">
    <property type="entry name" value="Aldedh"/>
    <property type="match status" value="1"/>
</dbReference>
<dbReference type="PIRSF" id="PIRSF000151">
    <property type="entry name" value="GPR"/>
    <property type="match status" value="1"/>
</dbReference>
<dbReference type="SUPFAM" id="SSF53720">
    <property type="entry name" value="ALDH-like"/>
    <property type="match status" value="1"/>
</dbReference>
<dbReference type="PROSITE" id="PS01223">
    <property type="entry name" value="PROA"/>
    <property type="match status" value="1"/>
</dbReference>
<gene>
    <name evidence="1" type="primary">proA</name>
    <name type="ordered locus">KPK_4410</name>
</gene>
<organism>
    <name type="scientific">Klebsiella pneumoniae (strain 342)</name>
    <dbReference type="NCBI Taxonomy" id="507522"/>
    <lineage>
        <taxon>Bacteria</taxon>
        <taxon>Pseudomonadati</taxon>
        <taxon>Pseudomonadota</taxon>
        <taxon>Gammaproteobacteria</taxon>
        <taxon>Enterobacterales</taxon>
        <taxon>Enterobacteriaceae</taxon>
        <taxon>Klebsiella/Raoultella group</taxon>
        <taxon>Klebsiella</taxon>
        <taxon>Klebsiella pneumoniae complex</taxon>
    </lineage>
</organism>
<sequence length="417" mass="44796">MLEQMGIAAKAASWQLALLSSREKNQVLEKIADYLEAQTDDILRANAEDLAEARANGLSEAMLDRLALTPARLSGIANDVRQVCNLADPVGQVIDGGLLDSGLRIERRRVPLGVIGVIYEARPNVTVDVASLCLKTGNAAILRGGKETWRTNAATVKVIQQALQECGLPAAAVQAIESPDRALVGEMLKMDKYIDMLIPRGGAGLHKLCREQSTIPVITGGIGVCHIFVDETAEIAPALKIIVNAKTQRPSTCNTVETLLVHRNIADTFLPALSKQMAESGVTLHAAPSALPALQNGPAKVEPVKAEQYDDEYLSLDLNVKVVADMDEAIAHIREHGTQHSDAILTRTLRNANRFINEVDSSAVYVNASTRFTDGGQFGLGAEVAVSTQKLHARGPMGLEALTTYKWIGFGDDTIRA</sequence>
<comment type="function">
    <text evidence="1">Catalyzes the NADPH-dependent reduction of L-glutamate 5-phosphate into L-glutamate 5-semialdehyde and phosphate. The product spontaneously undergoes cyclization to form 1-pyrroline-5-carboxylate.</text>
</comment>
<comment type="catalytic activity">
    <reaction evidence="1">
        <text>L-glutamate 5-semialdehyde + phosphate + NADP(+) = L-glutamyl 5-phosphate + NADPH + H(+)</text>
        <dbReference type="Rhea" id="RHEA:19541"/>
        <dbReference type="ChEBI" id="CHEBI:15378"/>
        <dbReference type="ChEBI" id="CHEBI:43474"/>
        <dbReference type="ChEBI" id="CHEBI:57783"/>
        <dbReference type="ChEBI" id="CHEBI:58066"/>
        <dbReference type="ChEBI" id="CHEBI:58274"/>
        <dbReference type="ChEBI" id="CHEBI:58349"/>
        <dbReference type="EC" id="1.2.1.41"/>
    </reaction>
</comment>
<comment type="pathway">
    <text evidence="1">Amino-acid biosynthesis; L-proline biosynthesis; L-glutamate 5-semialdehyde from L-glutamate: step 2/2.</text>
</comment>
<comment type="subcellular location">
    <subcellularLocation>
        <location evidence="1">Cytoplasm</location>
    </subcellularLocation>
</comment>
<comment type="similarity">
    <text evidence="1">Belongs to the gamma-glutamyl phosphate reductase family.</text>
</comment>
<accession>B5Y169</accession>
<feature type="chain" id="PRO_1000123812" description="Gamma-glutamyl phosphate reductase">
    <location>
        <begin position="1"/>
        <end position="417"/>
    </location>
</feature>
<protein>
    <recommendedName>
        <fullName evidence="1">Gamma-glutamyl phosphate reductase</fullName>
        <shortName evidence="1">GPR</shortName>
        <ecNumber evidence="1">1.2.1.41</ecNumber>
    </recommendedName>
    <alternativeName>
        <fullName evidence="1">Glutamate-5-semialdehyde dehydrogenase</fullName>
    </alternativeName>
    <alternativeName>
        <fullName evidence="1">Glutamyl-gamma-semialdehyde dehydrogenase</fullName>
        <shortName evidence="1">GSA dehydrogenase</shortName>
    </alternativeName>
</protein>
<name>PROA_KLEP3</name>